<proteinExistence type="inferred from homology"/>
<accession>A3N7P8</accession>
<name>Y1321_BURP6</name>
<dbReference type="EMBL" id="CP000570">
    <property type="protein sequence ID" value="ABN83330.1"/>
    <property type="molecule type" value="Genomic_DNA"/>
</dbReference>
<dbReference type="SMR" id="A3N7P8"/>
<dbReference type="KEGG" id="bpd:BURPS668_1321"/>
<dbReference type="HOGENOM" id="CLU_061989_0_0_4"/>
<dbReference type="GO" id="GO:0005829">
    <property type="term" value="C:cytosol"/>
    <property type="evidence" value="ECO:0007669"/>
    <property type="project" value="TreeGrafter"/>
</dbReference>
<dbReference type="GO" id="GO:0033194">
    <property type="term" value="P:response to hydroperoxide"/>
    <property type="evidence" value="ECO:0007669"/>
    <property type="project" value="TreeGrafter"/>
</dbReference>
<dbReference type="HAMAP" id="MF_00652">
    <property type="entry name" value="UPF0246"/>
    <property type="match status" value="1"/>
</dbReference>
<dbReference type="InterPro" id="IPR005583">
    <property type="entry name" value="YaaA"/>
</dbReference>
<dbReference type="NCBIfam" id="NF002541">
    <property type="entry name" value="PRK02101.1-1"/>
    <property type="match status" value="1"/>
</dbReference>
<dbReference type="NCBIfam" id="NF002542">
    <property type="entry name" value="PRK02101.1-3"/>
    <property type="match status" value="1"/>
</dbReference>
<dbReference type="PANTHER" id="PTHR30283:SF4">
    <property type="entry name" value="PEROXIDE STRESS RESISTANCE PROTEIN YAAA"/>
    <property type="match status" value="1"/>
</dbReference>
<dbReference type="PANTHER" id="PTHR30283">
    <property type="entry name" value="PEROXIDE STRESS RESPONSE PROTEIN YAAA"/>
    <property type="match status" value="1"/>
</dbReference>
<dbReference type="Pfam" id="PF03883">
    <property type="entry name" value="H2O2_YaaD"/>
    <property type="match status" value="1"/>
</dbReference>
<feature type="chain" id="PRO_1000061593" description="UPF0246 protein BURPS668_1321">
    <location>
        <begin position="1"/>
        <end position="260"/>
    </location>
</feature>
<evidence type="ECO:0000255" key="1">
    <source>
        <dbReference type="HAMAP-Rule" id="MF_00652"/>
    </source>
</evidence>
<sequence length="260" mass="29170">MIIVLSPAKSLDYETPPHVSHHTQPQFADDAAALIDELRRLSPQQIGTLMSISDPLARLNFQRYADWSRASTPANAKQAVLAFNGDVYEGLDARSLSPDDLDYAQRHVRVLSGLYGLLRPLDLLQPYRLEMGTRFSNARGKDLYAFWGERITHALNAELKTRVGASRVLVNCASAEYFKSVKPKLLDARVVTPVFEDWKDGRYKIISFHAKRARGLMARYVVEGRIDSPDALKDFASEGYAFDASASNDDTYVFRRRAGA</sequence>
<protein>
    <recommendedName>
        <fullName evidence="1">UPF0246 protein BURPS668_1321</fullName>
    </recommendedName>
</protein>
<organism>
    <name type="scientific">Burkholderia pseudomallei (strain 668)</name>
    <dbReference type="NCBI Taxonomy" id="320373"/>
    <lineage>
        <taxon>Bacteria</taxon>
        <taxon>Pseudomonadati</taxon>
        <taxon>Pseudomonadota</taxon>
        <taxon>Betaproteobacteria</taxon>
        <taxon>Burkholderiales</taxon>
        <taxon>Burkholderiaceae</taxon>
        <taxon>Burkholderia</taxon>
        <taxon>pseudomallei group</taxon>
    </lineage>
</organism>
<comment type="similarity">
    <text evidence="1">Belongs to the UPF0246 family.</text>
</comment>
<gene>
    <name type="ordered locus">BURPS668_1321</name>
</gene>
<reference key="1">
    <citation type="journal article" date="2010" name="Genome Biol. Evol.">
        <title>Continuing evolution of Burkholderia mallei through genome reduction and large-scale rearrangements.</title>
        <authorList>
            <person name="Losada L."/>
            <person name="Ronning C.M."/>
            <person name="DeShazer D."/>
            <person name="Woods D."/>
            <person name="Fedorova N."/>
            <person name="Kim H.S."/>
            <person name="Shabalina S.A."/>
            <person name="Pearson T.R."/>
            <person name="Brinkac L."/>
            <person name="Tan P."/>
            <person name="Nandi T."/>
            <person name="Crabtree J."/>
            <person name="Badger J."/>
            <person name="Beckstrom-Sternberg S."/>
            <person name="Saqib M."/>
            <person name="Schutzer S.E."/>
            <person name="Keim P."/>
            <person name="Nierman W.C."/>
        </authorList>
    </citation>
    <scope>NUCLEOTIDE SEQUENCE [LARGE SCALE GENOMIC DNA]</scope>
    <source>
        <strain>668</strain>
    </source>
</reference>